<accession>A0A2I2F2J6</accession>
<comment type="function">
    <text evidence="1">Chalcone isomerase; part of the gene cluster that mediates the biosynthesis of chlorflavonin, a fungal flavonoid with acetolactate synthase inhibitory activity (PubMed:36704842). Within the pathway, cfoK acts as chalcone isomerase (CHI), the key enzyme responsible for the tricyclic formation of flavanone through Michael-type intramolecular cyclization of chalcone. The hydrogen at C2'-OH is extracted by the imidazole ring of His-33, which induces the oxa-Michael addition to form the intermediate enolate through 6-endo-trig mode cyclization. The enolate can then be stabilized by a hydrogen bond with the Tyr-50 residue. Following enol tautomerization, the C ring, a gamma-pyranone ring, is formed (PubMed:36704842). The pathway begins with the PKS-NRPS hybrid synthetase cfoA that uses benzoic acid or p-hydroxybenzoic acid as a starter unit with four rounds of chain elongation using malonyl-CoA to form the chalcone skeleton. Then, a new type of chalcone isomerase, cfoK, catalyzes the conversion of the chalcone into a flavanone by a histidine-mediated oxa-Michael addition mechanism. The desaturation of flavanone to flavone is catalyzed by a new type of flavone synthase, the flavin mononucleotide (FMN)-dependent oxidoreductase cfoJ. Monooxygenases cfoF, cfoG, and P450 cfoH are responsible for the hydroxylation of the flavonoid skeleton at sites C3, C8, and C2', respectively. Like cfoF, the dehydratase cfoI plays also a role in the hydroxylation of position C3. Methyltransferases cfoB, cfoC, and cfoD then catalyze the methylation of C7-OH, C8-OH, and C3-OH, respectively. Finally, the monooxygenase cfoE is responsible for the chlorination of flavonoid at position C3' (PubMed:36704842).</text>
</comment>
<comment type="catalytic activity">
    <reaction evidence="1">
        <text>a chalcone = a flavanone.</text>
        <dbReference type="EC" id="5.5.1.6"/>
    </reaction>
</comment>
<comment type="pathway">
    <text evidence="1">Secondary metabolite biosynthesis; flavonoid biosynthesis.</text>
</comment>
<comment type="disruption phenotype">
    <text evidence="1">Impairs the formation of flavonones and leads to the accumulation of chalcone intermediates.</text>
</comment>
<organism>
    <name type="scientific">Aspergillus candidus</name>
    <dbReference type="NCBI Taxonomy" id="41067"/>
    <lineage>
        <taxon>Eukaryota</taxon>
        <taxon>Fungi</taxon>
        <taxon>Dikarya</taxon>
        <taxon>Ascomycota</taxon>
        <taxon>Pezizomycotina</taxon>
        <taxon>Eurotiomycetes</taxon>
        <taxon>Eurotiomycetidae</taxon>
        <taxon>Eurotiales</taxon>
        <taxon>Aspergillaceae</taxon>
        <taxon>Aspergillus</taxon>
        <taxon>Aspergillus subgen. Circumdati</taxon>
    </lineage>
</organism>
<keyword id="KW-0284">Flavonoid biosynthesis</keyword>
<keyword id="KW-0413">Isomerase</keyword>
<keyword id="KW-1185">Reference proteome</keyword>
<dbReference type="EC" id="5.5.1.6" evidence="1"/>
<dbReference type="EMBL" id="KZ559171">
    <property type="protein sequence ID" value="PLB34862.1"/>
    <property type="molecule type" value="Genomic_DNA"/>
</dbReference>
<dbReference type="STRING" id="41067.A0A2I2F2J6"/>
<dbReference type="OrthoDB" id="2578740at2759"/>
<dbReference type="UniPathway" id="UPA00154"/>
<dbReference type="Proteomes" id="UP000234585">
    <property type="component" value="Unassembled WGS sequence"/>
</dbReference>
<dbReference type="GO" id="GO:0016853">
    <property type="term" value="F:isomerase activity"/>
    <property type="evidence" value="ECO:0007669"/>
    <property type="project" value="UniProtKB-KW"/>
</dbReference>
<dbReference type="GO" id="GO:0009813">
    <property type="term" value="P:flavonoid biosynthetic process"/>
    <property type="evidence" value="ECO:0007669"/>
    <property type="project" value="UniProtKB-UniPathway"/>
</dbReference>
<dbReference type="Gene3D" id="3.30.70.100">
    <property type="match status" value="1"/>
</dbReference>
<dbReference type="InterPro" id="IPR011008">
    <property type="entry name" value="Dimeric_a/b-barrel"/>
</dbReference>
<dbReference type="SUPFAM" id="SSF54909">
    <property type="entry name" value="Dimeric alpha+beta barrel"/>
    <property type="match status" value="1"/>
</dbReference>
<proteinExistence type="evidence at protein level"/>
<gene>
    <name evidence="2" type="primary">cfok</name>
    <name type="ORF">BDW47DRAFT_111389</name>
</gene>
<sequence length="254" mass="27976">MSNNSKIIQMCVAGQRKKGWSDEQFAHEFTVVHAEITKATAEKAPALLGYRQVLAIPRPRISAFNMNNSTWDSQAVLTWSSIEELSSLLKSEGYRANAGNHVFTEPDIVGSISQVAGEFVFDPVGYSSQESRFMVFVYIPRATRSSRELVTEQEVAQRLDNITKIGAGTGLLRYVINRDVTPSDPSQLFDGTPFTNGDWGVMGVTEQYWFKDEDTASAFFADEARVDALMKVPSSLDGKSCVAVAGQETVLVSK</sequence>
<reference key="1">
    <citation type="submission" date="2017-12" db="EMBL/GenBank/DDBJ databases">
        <authorList>
            <consortium name="DOE Joint Genome Institute"/>
            <person name="Haridas S."/>
            <person name="Kjaerbolling I."/>
            <person name="Vesth T.C."/>
            <person name="Frisvad J.C."/>
            <person name="Nybo J.L."/>
            <person name="Theobald S."/>
            <person name="Kuo A."/>
            <person name="Bowyer P."/>
            <person name="Matsuda Y."/>
            <person name="Mondo S."/>
            <person name="Lyhne E.K."/>
            <person name="Kogle M.E."/>
            <person name="Clum A."/>
            <person name="Lipzen A."/>
            <person name="Salamov A."/>
            <person name="Ngan C.Y."/>
            <person name="Daum C."/>
            <person name="Chiniquy J."/>
            <person name="Barry K."/>
            <person name="LaButti K."/>
            <person name="Simmons B.A."/>
            <person name="Magnuson J.K."/>
            <person name="Mortensen U.H."/>
            <person name="Larsen T.O."/>
            <person name="Grigoriev I.V."/>
            <person name="Baker S.E."/>
            <person name="Andersen M.R."/>
            <person name="Nordberg H.P."/>
            <person name="Cantor M.N."/>
            <person name="Hua S.X."/>
        </authorList>
    </citation>
    <scope>NUCLEOTIDE SEQUENCE [LARGE SCALE GENOMIC DNA]</scope>
    <source>
        <strain>CBS 102.13</strain>
    </source>
</reference>
<reference key="2">
    <citation type="journal article" date="2023" name="Angew. Chem. Int. Ed.">
        <title>Discovery of a Unique Flavonoid Biosynthesis Mechanism in Fungi by Genome Mining.</title>
        <authorList>
            <person name="Zhang W."/>
            <person name="Zhang X."/>
            <person name="Feng D."/>
            <person name="Liang Y."/>
            <person name="Wu Z."/>
            <person name="Du S."/>
            <person name="Zhou Y."/>
            <person name="Geng C."/>
            <person name="Men P."/>
            <person name="Fu C."/>
            <person name="Huang X."/>
            <person name="Lu X."/>
        </authorList>
    </citation>
    <scope>FUNCTION</scope>
    <scope>DISRUPTION PHENOTYPE</scope>
    <scope>CATALYTIC ACTIVITY</scope>
    <scope>ACTIVE SITE</scope>
    <scope>MUTAGENESIS OF HIS-33 AND TYR-50</scope>
    <scope>PATHWAY</scope>
</reference>
<name>CFOK_ASPCN</name>
<feature type="chain" id="PRO_0000459542" description="Chalcone isomerase cfoK">
    <location>
        <begin position="1"/>
        <end position="254"/>
    </location>
</feature>
<feature type="active site" evidence="1">
    <location>
        <position position="33"/>
    </location>
</feature>
<feature type="active site" evidence="1">
    <location>
        <position position="50"/>
    </location>
</feature>
<feature type="mutagenesis site" description="Completely abolishes the catalytic activity." evidence="1">
    <original>H</original>
    <variation>A</variation>
    <variation>Q</variation>
    <location>
        <position position="33"/>
    </location>
</feature>
<feature type="mutagenesis site" description="Completely abolishes the catalytic activity." evidence="1">
    <original>Y</original>
    <variation>A</variation>
    <variation>F</variation>
    <location>
        <position position="50"/>
    </location>
</feature>
<protein>
    <recommendedName>
        <fullName evidence="2">Chalcone isomerase cfoK</fullName>
        <shortName evidence="2">CHI cfoK</shortName>
        <ecNumber evidence="1">5.5.1.6</ecNumber>
    </recommendedName>
    <alternativeName>
        <fullName evidence="2">Chlorflavonin biosynthesis cluster protein K</fullName>
    </alternativeName>
</protein>
<evidence type="ECO:0000269" key="1">
    <source>
    </source>
</evidence>
<evidence type="ECO:0000303" key="2">
    <source>
    </source>
</evidence>